<evidence type="ECO:0000250" key="1"/>
<evidence type="ECO:0000255" key="2"/>
<evidence type="ECO:0000255" key="3">
    <source>
        <dbReference type="PROSITE-ProRule" id="PRU00043"/>
    </source>
</evidence>
<evidence type="ECO:0000255" key="4">
    <source>
        <dbReference type="PROSITE-ProRule" id="PRU00076"/>
    </source>
</evidence>
<evidence type="ECO:0000255" key="5">
    <source>
        <dbReference type="PROSITE-ProRule" id="PRU00122"/>
    </source>
</evidence>
<evidence type="ECO:0000256" key="6">
    <source>
        <dbReference type="SAM" id="MobiDB-lite"/>
    </source>
</evidence>
<evidence type="ECO:0000305" key="7"/>
<organism>
    <name type="scientific">Drosophila melanogaster</name>
    <name type="common">Fruit fly</name>
    <dbReference type="NCBI Taxonomy" id="7227"/>
    <lineage>
        <taxon>Eukaryota</taxon>
        <taxon>Metazoa</taxon>
        <taxon>Ecdysozoa</taxon>
        <taxon>Arthropoda</taxon>
        <taxon>Hexapoda</taxon>
        <taxon>Insecta</taxon>
        <taxon>Pterygota</taxon>
        <taxon>Neoptera</taxon>
        <taxon>Endopterygota</taxon>
        <taxon>Diptera</taxon>
        <taxon>Brachycera</taxon>
        <taxon>Muscomorpha</taxon>
        <taxon>Ephydroidea</taxon>
        <taxon>Drosophilidae</taxon>
        <taxon>Drosophila</taxon>
        <taxon>Sophophora</taxon>
    </lineage>
</organism>
<gene>
    <name type="primary">CadN2</name>
    <name type="ORF">CG42829</name>
    <name type="ORF">CG7527</name>
</gene>
<comment type="function">
    <text evidence="1">Cadherins are calcium-dependent cell adhesion proteins. They preferentially interact with themselves in a homophilic manner in connecting cells (By similarity).</text>
</comment>
<comment type="subcellular location">
    <subcellularLocation>
        <location evidence="7">Cell membrane</location>
        <topology evidence="7">Single-pass type I membrane protein</topology>
    </subcellularLocation>
</comment>
<comment type="domain">
    <text evidence="1">Three calcium ions are usually bound at the interface of each cadherin domain and rigidify the connections, imparting a strong curvature to the full-length ectodomain.</text>
</comment>
<dbReference type="EMBL" id="AE014134">
    <property type="protein sequence ID" value="AAF53636.4"/>
    <property type="molecule type" value="Genomic_DNA"/>
</dbReference>
<dbReference type="EMBL" id="AE014134">
    <property type="protein sequence ID" value="ABI31322.2"/>
    <property type="molecule type" value="Genomic_DNA"/>
</dbReference>
<dbReference type="EMBL" id="BT132666">
    <property type="protein sequence ID" value="AEQ05568.1"/>
    <property type="molecule type" value="mRNA"/>
</dbReference>
<dbReference type="RefSeq" id="NP_001036368.2">
    <property type="nucleotide sequence ID" value="NM_001042903.4"/>
</dbReference>
<dbReference type="RefSeq" id="NP_609855.3">
    <property type="nucleotide sequence ID" value="NM_136011.4"/>
</dbReference>
<dbReference type="SMR" id="Q9VJB6"/>
<dbReference type="BioGRID" id="61067">
    <property type="interactions" value="1"/>
</dbReference>
<dbReference type="FunCoup" id="Q9VJB6">
    <property type="interactions" value="90"/>
</dbReference>
<dbReference type="IntAct" id="Q9VJB6">
    <property type="interactions" value="10"/>
</dbReference>
<dbReference type="STRING" id="7227.FBpp0300935"/>
<dbReference type="GlyCosmos" id="Q9VJB6">
    <property type="glycosylation" value="16 sites, No reported glycans"/>
</dbReference>
<dbReference type="GlyGen" id="Q9VJB6">
    <property type="glycosylation" value="16 sites"/>
</dbReference>
<dbReference type="PaxDb" id="7227-FBpp0300935"/>
<dbReference type="EnsemblMetazoa" id="FBtr0303836">
    <property type="protein sequence ID" value="FBpp0292843"/>
    <property type="gene ID" value="FBgn0262018"/>
</dbReference>
<dbReference type="EnsemblMetazoa" id="FBtr0308770">
    <property type="protein sequence ID" value="FBpp0300935"/>
    <property type="gene ID" value="FBgn0262018"/>
</dbReference>
<dbReference type="GeneID" id="35071"/>
<dbReference type="KEGG" id="dme:Dmel_CG42829"/>
<dbReference type="UCSC" id="CG7527-RB">
    <property type="organism name" value="d. melanogaster"/>
</dbReference>
<dbReference type="AGR" id="FB:FBgn0262018"/>
<dbReference type="CTD" id="35071"/>
<dbReference type="FlyBase" id="FBgn0262018">
    <property type="gene designation" value="CadN2"/>
</dbReference>
<dbReference type="VEuPathDB" id="VectorBase:FBgn0262018"/>
<dbReference type="eggNOG" id="KOG3594">
    <property type="taxonomic scope" value="Eukaryota"/>
</dbReference>
<dbReference type="GeneTree" id="ENSGT00940000173178"/>
<dbReference type="HOGENOM" id="CLU_000347_0_1_1"/>
<dbReference type="InParanoid" id="Q9VJB6"/>
<dbReference type="OMA" id="DDEPHEY"/>
<dbReference type="OrthoDB" id="6079678at2759"/>
<dbReference type="PhylomeDB" id="Q9VJB6"/>
<dbReference type="Reactome" id="R-DME-1474228">
    <property type="pathway name" value="Degradation of the extracellular matrix"/>
</dbReference>
<dbReference type="Reactome" id="R-DME-216083">
    <property type="pathway name" value="Integrin cell surface interactions"/>
</dbReference>
<dbReference type="Reactome" id="R-DME-351906">
    <property type="pathway name" value="Apoptotic cleavage of cell adhesion proteins"/>
</dbReference>
<dbReference type="Reactome" id="R-DME-381426">
    <property type="pathway name" value="Regulation of Insulin-like Growth Factor (IGF) transport and uptake by Insulin-like Growth Factor Binding Proteins (IGFBPs)"/>
</dbReference>
<dbReference type="Reactome" id="R-DME-418990">
    <property type="pathway name" value="Adherens junctions interactions"/>
</dbReference>
<dbReference type="Reactome" id="R-DME-5218920">
    <property type="pathway name" value="VEGFR2 mediated vascular permeability"/>
</dbReference>
<dbReference type="Reactome" id="R-DME-525793">
    <property type="pathway name" value="Myogenesis"/>
</dbReference>
<dbReference type="Reactome" id="R-DME-8957275">
    <property type="pathway name" value="Post-translational protein phosphorylation"/>
</dbReference>
<dbReference type="Reactome" id="R-DME-9762292">
    <property type="pathway name" value="Regulation of CDH11 function"/>
</dbReference>
<dbReference type="SignaLink" id="Q9VJB6"/>
<dbReference type="BioGRID-ORCS" id="35071">
    <property type="hits" value="0 hits in 1 CRISPR screen"/>
</dbReference>
<dbReference type="GenomeRNAi" id="35071"/>
<dbReference type="PRO" id="PR:Q9VJB6"/>
<dbReference type="Proteomes" id="UP000000803">
    <property type="component" value="Chromosome 2L"/>
</dbReference>
<dbReference type="Bgee" id="FBgn0262018">
    <property type="expression patterns" value="Expressed in lamina monopolar neuron L3 (Drosophila) in insect head and 57 other cell types or tissues"/>
</dbReference>
<dbReference type="GO" id="GO:0016342">
    <property type="term" value="C:catenin complex"/>
    <property type="evidence" value="ECO:0000318"/>
    <property type="project" value="GO_Central"/>
</dbReference>
<dbReference type="GO" id="GO:0005886">
    <property type="term" value="C:plasma membrane"/>
    <property type="evidence" value="ECO:0000250"/>
    <property type="project" value="FlyBase"/>
</dbReference>
<dbReference type="GO" id="GO:0008013">
    <property type="term" value="F:beta-catenin binding"/>
    <property type="evidence" value="ECO:0000318"/>
    <property type="project" value="GO_Central"/>
</dbReference>
<dbReference type="GO" id="GO:0045296">
    <property type="term" value="F:cadherin binding"/>
    <property type="evidence" value="ECO:0000318"/>
    <property type="project" value="GO_Central"/>
</dbReference>
<dbReference type="GO" id="GO:0005509">
    <property type="term" value="F:calcium ion binding"/>
    <property type="evidence" value="ECO:0000255"/>
    <property type="project" value="FlyBase"/>
</dbReference>
<dbReference type="GO" id="GO:0048846">
    <property type="term" value="P:axon extension involved in axon guidance"/>
    <property type="evidence" value="ECO:0000315"/>
    <property type="project" value="FlyBase"/>
</dbReference>
<dbReference type="GO" id="GO:0016339">
    <property type="term" value="P:calcium-dependent cell-cell adhesion via plasma membrane cell adhesion molecules"/>
    <property type="evidence" value="ECO:0000250"/>
    <property type="project" value="FlyBase"/>
</dbReference>
<dbReference type="GO" id="GO:0016477">
    <property type="term" value="P:cell migration"/>
    <property type="evidence" value="ECO:0000318"/>
    <property type="project" value="GO_Central"/>
</dbReference>
<dbReference type="GO" id="GO:0044331">
    <property type="term" value="P:cell-cell adhesion mediated by cadherin"/>
    <property type="evidence" value="ECO:0000255"/>
    <property type="project" value="FlyBase"/>
</dbReference>
<dbReference type="GO" id="GO:0098742">
    <property type="term" value="P:cell-cell adhesion via plasma-membrane adhesion molecules"/>
    <property type="evidence" value="ECO:0000318"/>
    <property type="project" value="GO_Central"/>
</dbReference>
<dbReference type="GO" id="GO:0007156">
    <property type="term" value="P:homophilic cell adhesion via plasma membrane adhesion molecules"/>
    <property type="evidence" value="ECO:0000250"/>
    <property type="project" value="FlyBase"/>
</dbReference>
<dbReference type="GO" id="GO:0031175">
    <property type="term" value="P:neuron projection development"/>
    <property type="evidence" value="ECO:0000318"/>
    <property type="project" value="GO_Central"/>
</dbReference>
<dbReference type="GO" id="GO:0016318">
    <property type="term" value="P:ommatidial rotation"/>
    <property type="evidence" value="ECO:0000315"/>
    <property type="project" value="FlyBase"/>
</dbReference>
<dbReference type="GO" id="GO:0045467">
    <property type="term" value="P:R7 cell development"/>
    <property type="evidence" value="ECO:0000315"/>
    <property type="project" value="FlyBase"/>
</dbReference>
<dbReference type="GO" id="GO:0045463">
    <property type="term" value="P:R8 cell development"/>
    <property type="evidence" value="ECO:0000315"/>
    <property type="project" value="FlyBase"/>
</dbReference>
<dbReference type="CDD" id="cd11304">
    <property type="entry name" value="Cadherin_repeat"/>
    <property type="match status" value="5"/>
</dbReference>
<dbReference type="CDD" id="cd00054">
    <property type="entry name" value="EGF_CA"/>
    <property type="match status" value="2"/>
</dbReference>
<dbReference type="CDD" id="cd00110">
    <property type="entry name" value="LamG"/>
    <property type="match status" value="2"/>
</dbReference>
<dbReference type="FunFam" id="2.60.40.60:FF:000182">
    <property type="entry name" value="Blast:Putative neural-cadherin 2"/>
    <property type="match status" value="1"/>
</dbReference>
<dbReference type="FunFam" id="4.10.900.10:FF:000001">
    <property type="entry name" value="Cadherin 2"/>
    <property type="match status" value="1"/>
</dbReference>
<dbReference type="FunFam" id="2.60.40.60:FF:000039">
    <property type="entry name" value="FAT atypical cadherin 3"/>
    <property type="match status" value="1"/>
</dbReference>
<dbReference type="FunFam" id="2.10.25.10:FF:000417">
    <property type="entry name" value="neural-cadherin isoform X1"/>
    <property type="match status" value="1"/>
</dbReference>
<dbReference type="FunFam" id="2.60.120.200:FF:000040">
    <property type="entry name" value="neural-cadherin isoform X1"/>
    <property type="match status" value="1"/>
</dbReference>
<dbReference type="FunFam" id="2.60.120.200:FF:000044">
    <property type="entry name" value="neural-cadherin isoform X1"/>
    <property type="match status" value="1"/>
</dbReference>
<dbReference type="FunFam" id="2.60.40.60:FF:000112">
    <property type="entry name" value="neural-cadherin isoform X1"/>
    <property type="match status" value="1"/>
</dbReference>
<dbReference type="FunFam" id="2.60.40.60:FF:000213">
    <property type="entry name" value="neural-cadherin isoform X1"/>
    <property type="match status" value="1"/>
</dbReference>
<dbReference type="FunFam" id="2.10.25.10:FF:000312">
    <property type="entry name" value="neural-cadherin isoform X10"/>
    <property type="match status" value="1"/>
</dbReference>
<dbReference type="FunFam" id="2.60.40.60:FF:000128">
    <property type="entry name" value="neural-cadherin isoform X2"/>
    <property type="match status" value="1"/>
</dbReference>
<dbReference type="Gene3D" id="2.60.120.200">
    <property type="match status" value="2"/>
</dbReference>
<dbReference type="Gene3D" id="2.60.40.60">
    <property type="entry name" value="Cadherins"/>
    <property type="match status" value="7"/>
</dbReference>
<dbReference type="Gene3D" id="2.10.25.10">
    <property type="entry name" value="Laminin"/>
    <property type="match status" value="2"/>
</dbReference>
<dbReference type="Gene3D" id="4.10.900.10">
    <property type="entry name" value="TCF3-CBD (Catenin binding domain)"/>
    <property type="match status" value="1"/>
</dbReference>
<dbReference type="InterPro" id="IPR039808">
    <property type="entry name" value="Cadherin"/>
</dbReference>
<dbReference type="InterPro" id="IPR002126">
    <property type="entry name" value="Cadherin-like_dom"/>
</dbReference>
<dbReference type="InterPro" id="IPR015919">
    <property type="entry name" value="Cadherin-like_sf"/>
</dbReference>
<dbReference type="InterPro" id="IPR020894">
    <property type="entry name" value="Cadherin_CS"/>
</dbReference>
<dbReference type="InterPro" id="IPR000233">
    <property type="entry name" value="Cadherin_Y-type_LIR"/>
</dbReference>
<dbReference type="InterPro" id="IPR027397">
    <property type="entry name" value="Catenin-bd_sf"/>
</dbReference>
<dbReference type="InterPro" id="IPR013320">
    <property type="entry name" value="ConA-like_dom_sf"/>
</dbReference>
<dbReference type="InterPro" id="IPR001881">
    <property type="entry name" value="EGF-like_Ca-bd_dom"/>
</dbReference>
<dbReference type="InterPro" id="IPR000742">
    <property type="entry name" value="EGF-like_dom"/>
</dbReference>
<dbReference type="InterPro" id="IPR001791">
    <property type="entry name" value="Laminin_G"/>
</dbReference>
<dbReference type="InterPro" id="IPR056370">
    <property type="entry name" value="Shg-like_Ig-like"/>
</dbReference>
<dbReference type="PANTHER" id="PTHR24027:SF438">
    <property type="entry name" value="CADHERIN 23"/>
    <property type="match status" value="1"/>
</dbReference>
<dbReference type="PANTHER" id="PTHR24027">
    <property type="entry name" value="CADHERIN-23"/>
    <property type="match status" value="1"/>
</dbReference>
<dbReference type="Pfam" id="PF01049">
    <property type="entry name" value="CADH_Y-type_LIR"/>
    <property type="match status" value="1"/>
</dbReference>
<dbReference type="Pfam" id="PF00028">
    <property type="entry name" value="Cadherin"/>
    <property type="match status" value="5"/>
</dbReference>
<dbReference type="Pfam" id="PF00008">
    <property type="entry name" value="EGF"/>
    <property type="match status" value="1"/>
</dbReference>
<dbReference type="Pfam" id="PF24811">
    <property type="entry name" value="Ig_Shg"/>
    <property type="match status" value="1"/>
</dbReference>
<dbReference type="Pfam" id="PF02210">
    <property type="entry name" value="Laminin_G_2"/>
    <property type="match status" value="2"/>
</dbReference>
<dbReference type="PRINTS" id="PR00205">
    <property type="entry name" value="CADHERIN"/>
</dbReference>
<dbReference type="SMART" id="SM00112">
    <property type="entry name" value="CA"/>
    <property type="match status" value="6"/>
</dbReference>
<dbReference type="SMART" id="SM00181">
    <property type="entry name" value="EGF"/>
    <property type="match status" value="4"/>
</dbReference>
<dbReference type="SMART" id="SM00179">
    <property type="entry name" value="EGF_CA"/>
    <property type="match status" value="4"/>
</dbReference>
<dbReference type="SMART" id="SM00282">
    <property type="entry name" value="LamG"/>
    <property type="match status" value="2"/>
</dbReference>
<dbReference type="SUPFAM" id="SSF49313">
    <property type="entry name" value="Cadherin-like"/>
    <property type="match status" value="7"/>
</dbReference>
<dbReference type="SUPFAM" id="SSF49899">
    <property type="entry name" value="Concanavalin A-like lectins/glucanases"/>
    <property type="match status" value="2"/>
</dbReference>
<dbReference type="SUPFAM" id="SSF57196">
    <property type="entry name" value="EGF/Laminin"/>
    <property type="match status" value="2"/>
</dbReference>
<dbReference type="PROSITE" id="PS00232">
    <property type="entry name" value="CADHERIN_1"/>
    <property type="match status" value="4"/>
</dbReference>
<dbReference type="PROSITE" id="PS50268">
    <property type="entry name" value="CADHERIN_2"/>
    <property type="match status" value="7"/>
</dbReference>
<dbReference type="PROSITE" id="PS00022">
    <property type="entry name" value="EGF_1"/>
    <property type="match status" value="2"/>
</dbReference>
<dbReference type="PROSITE" id="PS01186">
    <property type="entry name" value="EGF_2"/>
    <property type="match status" value="2"/>
</dbReference>
<dbReference type="PROSITE" id="PS50026">
    <property type="entry name" value="EGF_3"/>
    <property type="match status" value="3"/>
</dbReference>
<dbReference type="PROSITE" id="PS50025">
    <property type="entry name" value="LAM_G_DOMAIN"/>
    <property type="match status" value="2"/>
</dbReference>
<name>CADN2_DROME</name>
<keyword id="KW-0106">Calcium</keyword>
<keyword id="KW-0130">Cell adhesion</keyword>
<keyword id="KW-1003">Cell membrane</keyword>
<keyword id="KW-1015">Disulfide bond</keyword>
<keyword id="KW-0245">EGF-like domain</keyword>
<keyword id="KW-0325">Glycoprotein</keyword>
<keyword id="KW-0472">Membrane</keyword>
<keyword id="KW-0479">Metal-binding</keyword>
<keyword id="KW-1185">Reference proteome</keyword>
<keyword id="KW-0677">Repeat</keyword>
<keyword id="KW-0812">Transmembrane</keyword>
<keyword id="KW-1133">Transmembrane helix</keyword>
<accession>Q9VJB6</accession>
<accession>G4LU36</accession>
<accession>Q0E8P8</accession>
<sequence length="1799" mass="200480">MVDPLKIFWVLTNSTYLVTKFVRIGIADKNDSPPYFDRFLYETEIDENADLQSTVLTVNAKDHNESTNIRYQITGGNIGNAFAVQNTTGVIYVASPLDYETRPRYELRLEATRNRKNNYTTVVINVRDVNDNPPVFDRQTYRTQITEEDDRNLPKRILQVTATDGDVDRPINIVYFLTGQGIDPDNPANSKFDINRTTGDIFVLKPLDRDQPNGRPQWRFTVFAQDEGGEGLVGYADIQVNLKDINDNAPQFPQGIYFGNVTENGTAGSSVMTMSAVDYDDPNESTNAKLIYSIEKNVIEEETGAPIFEIEPETGLIKTAVCCLDRERTPDYSIQVVAMDGGGLKGTGTASIRVKDLNDMPPQFTKDEWVTEVDETNGTYIPETPILTVTVQDEDETNTFQYKVVPNSGFGADKFAMVRNGDGTGSLKIIQPLDYEDPLQSSGFRFRIQVNDKGDDGPGGSDKYHVAYSWVVVKLRDINDNVPKFDREHIEVSIYEDTKVGTILEQFKATDADQGGHSKVAYKIVRSTNRKRQFAISDRGAVSIQRPLDRETQDRHHIQILAIDDGSPARTATATLTVIVKDVNDNAPTFAQDYKPTLPENVSGKKILEVAAKDPDDRLRGNGGPFTFRLDPLASDEIKAGFKVEYDRRGDNENGVAIISSLRPFDREAQKSYAIPIEIKDNGAPAMTGTSTLTVTIGDVNDNKMQPGSKSVLVYNYQGQSQDTPIGRVYVNDPDDWDVPDKKYYWEVQEHQRFKLDTDTGILTMRAGTRRGRYQLRFKVYDREHGQEDIPANLSVTVRDITAEAVQQAGSMRLSHITDEDFVRTWNPVKNQVEPSKLERFRNKLAELLYTDRDNVDVFSVQLKEGSPYPLTDVHFAARSATQQPYFKAVRLNGVVQMHREEIEKDVGLNITMVNINECLHEGKGKCGSNSCTSKVELGKKPYTVSVNRTALVGVRLDISAQCVCRARNFTHQDHNCRTHLCYNGGRCVETRNGPKCVACPVGYNGPRCQQSTRSFRGNGWAWYPPLQLCQESHLSLEFITRVADGLILYNGPIVPPKPEETVISDFIALELEQGYPRLLIDFGSGTLELRVKTKKTLDDGVWHRLDIFWDTENVRMVVDFCRTALVSEMEDGTPPEFDDNACQARGQIPPFAESLNLNQPLQLGGLYRQHFDQTLYNWQYAFSSKGFDGCIRNVIHNSEHYDLAFPALARNSFPACPQTDEVCLKTEHTARCWEHGNCVASLVQAKCHCQPGWMGPGCNVPTIPTTFKAQSYVKFALSFEPDRFSTQLQLRFRTREQGGELFRVSDQHHREYAILELRRGHLQFRYNLNSMRNEEQLLTLTAIAVNDGQWHVIRISRYGSAALMELDGGESRRYNESFHFTGHQWLTIDKQEGVYAGGKAEYTGIKTFEVQSDFQRSCLDDIRLDGKHLPLPPAMNGTQWGQATMARNLERNCPSNRPCSNVICPDPFDCVDLWNEYECTCSEGRIMSSDTKGCVDRNECLDLPCLNGATCINLEPRLRYRCICPEGYWGENCELVQEGQRLKLSMGALGAIFVCLIIILILALIFVLYSRKRKTTKKKKRSGPEKDVRETVISYEDEGGGEDDMTAFDITPLQIPISAQGGPPDIAACKMPIIYPVMTLLPPGQELNVAYLMEERKQRIDKDNNAPPFDDLRNFTFEGSGSIAESLSSLASGTDDENQDFNYLQNWGPRFNALAAMYVHDKAKASSQLPSDGGGGSGDGPGPGASSSSPLGGGGTGGGSGIPGNVLAVVATGSGAGPGGGGGSSGLMPLPEVDKVVL</sequence>
<proteinExistence type="evidence at transcript level"/>
<protein>
    <recommendedName>
        <fullName>Putative neural-cadherin 2</fullName>
    </recommendedName>
    <alternativeName>
        <fullName>Cadherin-N2</fullName>
        <shortName>dN2-cadherin</shortName>
    </alternativeName>
</protein>
<feature type="chain" id="PRO_0000003883" description="Putative neural-cadherin 2">
    <location>
        <begin position="1"/>
        <end position="1799"/>
    </location>
</feature>
<feature type="transmembrane region" description="Helical" evidence="2">
    <location>
        <begin position="1549"/>
        <end position="1569"/>
    </location>
</feature>
<feature type="domain" description="Cadherin 1" evidence="3">
    <location>
        <begin position="37"/>
        <end position="136"/>
    </location>
</feature>
<feature type="domain" description="Cadherin 2" evidence="3">
    <location>
        <begin position="137"/>
        <end position="252"/>
    </location>
</feature>
<feature type="domain" description="Cadherin 3" evidence="3">
    <location>
        <begin position="253"/>
        <end position="364"/>
    </location>
</feature>
<feature type="domain" description="Cadherin 4" evidence="3">
    <location>
        <begin position="368"/>
        <end position="485"/>
    </location>
</feature>
<feature type="domain" description="Cadherin 5" evidence="3">
    <location>
        <begin position="486"/>
        <end position="590"/>
    </location>
</feature>
<feature type="domain" description="Cadherin 6" evidence="3">
    <location>
        <begin position="590"/>
        <end position="709"/>
    </location>
</feature>
<feature type="domain" description="Cadherin 7" evidence="3">
    <location>
        <begin position="708"/>
        <end position="812"/>
    </location>
</feature>
<feature type="domain" description="EGF-like 1" evidence="4">
    <location>
        <begin position="973"/>
        <end position="1010"/>
    </location>
</feature>
<feature type="domain" description="Laminin G-like 1" evidence="5">
    <location>
        <begin position="1011"/>
        <end position="1217"/>
    </location>
</feature>
<feature type="domain" description="EGF-like 2" evidence="4">
    <location>
        <begin position="1220"/>
        <end position="1260"/>
    </location>
</feature>
<feature type="domain" description="Laminin G-like 2" evidence="5">
    <location>
        <begin position="1263"/>
        <end position="1454"/>
    </location>
</feature>
<feature type="domain" description="EGF-like 3; calcium-binding" evidence="4">
    <location>
        <begin position="1497"/>
        <end position="1535"/>
    </location>
</feature>
<feature type="region of interest" description="Disordered" evidence="6">
    <location>
        <begin position="1726"/>
        <end position="1799"/>
    </location>
</feature>
<feature type="compositionally biased region" description="Gly residues" evidence="6">
    <location>
        <begin position="1733"/>
        <end position="1744"/>
    </location>
</feature>
<feature type="compositionally biased region" description="Gly residues" evidence="6">
    <location>
        <begin position="1752"/>
        <end position="1763"/>
    </location>
</feature>
<feature type="compositionally biased region" description="Gly residues" evidence="6">
    <location>
        <begin position="1775"/>
        <end position="1786"/>
    </location>
</feature>
<feature type="glycosylation site" description="N-linked (GlcNAc...) asparagine" evidence="2">
    <location>
        <position position="13"/>
    </location>
</feature>
<feature type="glycosylation site" description="N-linked (GlcNAc...) asparagine" evidence="2">
    <location>
        <position position="64"/>
    </location>
</feature>
<feature type="glycosylation site" description="N-linked (GlcNAc...) asparagine" evidence="2">
    <location>
        <position position="86"/>
    </location>
</feature>
<feature type="glycosylation site" description="N-linked (GlcNAc...) asparagine" evidence="2">
    <location>
        <position position="118"/>
    </location>
</feature>
<feature type="glycosylation site" description="N-linked (GlcNAc...) asparagine" evidence="2">
    <location>
        <position position="195"/>
    </location>
</feature>
<feature type="glycosylation site" description="N-linked (GlcNAc...) asparagine" evidence="2">
    <location>
        <position position="260"/>
    </location>
</feature>
<feature type="glycosylation site" description="N-linked (GlcNAc...) asparagine" evidence="2">
    <location>
        <position position="264"/>
    </location>
</feature>
<feature type="glycosylation site" description="N-linked (GlcNAc...) asparagine" evidence="2">
    <location>
        <position position="283"/>
    </location>
</feature>
<feature type="glycosylation site" description="N-linked (GlcNAc...) asparagine" evidence="2">
    <location>
        <position position="377"/>
    </location>
</feature>
<feature type="glycosylation site" description="N-linked (GlcNAc...) asparagine" evidence="2">
    <location>
        <position position="601"/>
    </location>
</feature>
<feature type="glycosylation site" description="N-linked (GlcNAc...) asparagine" evidence="2">
    <location>
        <position position="793"/>
    </location>
</feature>
<feature type="glycosylation site" description="N-linked (GlcNAc...) asparagine" evidence="2">
    <location>
        <position position="910"/>
    </location>
</feature>
<feature type="glycosylation site" description="N-linked (GlcNAc...) asparagine" evidence="2">
    <location>
        <position position="948"/>
    </location>
</feature>
<feature type="glycosylation site" description="N-linked (GlcNAc...) asparagine" evidence="2">
    <location>
        <position position="969"/>
    </location>
</feature>
<feature type="glycosylation site" description="N-linked (GlcNAc...) asparagine" evidence="2">
    <location>
        <position position="1376"/>
    </location>
</feature>
<feature type="glycosylation site" description="N-linked (GlcNAc...) asparagine" evidence="2">
    <location>
        <position position="1437"/>
    </location>
</feature>
<feature type="disulfide bond" evidence="1">
    <location>
        <begin position="977"/>
        <end position="988"/>
    </location>
</feature>
<feature type="disulfide bond" evidence="1">
    <location>
        <begin position="982"/>
        <end position="997"/>
    </location>
</feature>
<feature type="disulfide bond" evidence="1">
    <location>
        <begin position="1000"/>
        <end position="1009"/>
    </location>
</feature>
<feature type="disulfide bond" evidence="1">
    <location>
        <begin position="1191"/>
        <end position="1217"/>
    </location>
</feature>
<feature type="disulfide bond" evidence="1">
    <location>
        <begin position="1224"/>
        <end position="1239"/>
    </location>
</feature>
<feature type="disulfide bond" evidence="1">
    <location>
        <begin position="1233"/>
        <end position="1248"/>
    </location>
</feature>
<feature type="disulfide bond" evidence="1">
    <location>
        <begin position="1250"/>
        <end position="1259"/>
    </location>
</feature>
<feature type="disulfide bond" evidence="1">
    <location>
        <begin position="1419"/>
        <end position="1454"/>
    </location>
</feature>
<feature type="disulfide bond" evidence="1">
    <location>
        <begin position="1501"/>
        <end position="1512"/>
    </location>
</feature>
<feature type="disulfide bond" evidence="1">
    <location>
        <begin position="1506"/>
        <end position="1523"/>
    </location>
</feature>
<feature type="disulfide bond" evidence="1">
    <location>
        <begin position="1525"/>
        <end position="1534"/>
    </location>
</feature>
<reference key="1">
    <citation type="journal article" date="2000" name="Science">
        <title>The genome sequence of Drosophila melanogaster.</title>
        <authorList>
            <person name="Adams M.D."/>
            <person name="Celniker S.E."/>
            <person name="Holt R.A."/>
            <person name="Evans C.A."/>
            <person name="Gocayne J.D."/>
            <person name="Amanatides P.G."/>
            <person name="Scherer S.E."/>
            <person name="Li P.W."/>
            <person name="Hoskins R.A."/>
            <person name="Galle R.F."/>
            <person name="George R.A."/>
            <person name="Lewis S.E."/>
            <person name="Richards S."/>
            <person name="Ashburner M."/>
            <person name="Henderson S.N."/>
            <person name="Sutton G.G."/>
            <person name="Wortman J.R."/>
            <person name="Yandell M.D."/>
            <person name="Zhang Q."/>
            <person name="Chen L.X."/>
            <person name="Brandon R.C."/>
            <person name="Rogers Y.-H.C."/>
            <person name="Blazej R.G."/>
            <person name="Champe M."/>
            <person name="Pfeiffer B.D."/>
            <person name="Wan K.H."/>
            <person name="Doyle C."/>
            <person name="Baxter E.G."/>
            <person name="Helt G."/>
            <person name="Nelson C.R."/>
            <person name="Miklos G.L.G."/>
            <person name="Abril J.F."/>
            <person name="Agbayani A."/>
            <person name="An H.-J."/>
            <person name="Andrews-Pfannkoch C."/>
            <person name="Baldwin D."/>
            <person name="Ballew R.M."/>
            <person name="Basu A."/>
            <person name="Baxendale J."/>
            <person name="Bayraktaroglu L."/>
            <person name="Beasley E.M."/>
            <person name="Beeson K.Y."/>
            <person name="Benos P.V."/>
            <person name="Berman B.P."/>
            <person name="Bhandari D."/>
            <person name="Bolshakov S."/>
            <person name="Borkova D."/>
            <person name="Botchan M.R."/>
            <person name="Bouck J."/>
            <person name="Brokstein P."/>
            <person name="Brottier P."/>
            <person name="Burtis K.C."/>
            <person name="Busam D.A."/>
            <person name="Butler H."/>
            <person name="Cadieu E."/>
            <person name="Center A."/>
            <person name="Chandra I."/>
            <person name="Cherry J.M."/>
            <person name="Cawley S."/>
            <person name="Dahlke C."/>
            <person name="Davenport L.B."/>
            <person name="Davies P."/>
            <person name="de Pablos B."/>
            <person name="Delcher A."/>
            <person name="Deng Z."/>
            <person name="Mays A.D."/>
            <person name="Dew I."/>
            <person name="Dietz S.M."/>
            <person name="Dodson K."/>
            <person name="Doup L.E."/>
            <person name="Downes M."/>
            <person name="Dugan-Rocha S."/>
            <person name="Dunkov B.C."/>
            <person name="Dunn P."/>
            <person name="Durbin K.J."/>
            <person name="Evangelista C.C."/>
            <person name="Ferraz C."/>
            <person name="Ferriera S."/>
            <person name="Fleischmann W."/>
            <person name="Fosler C."/>
            <person name="Gabrielian A.E."/>
            <person name="Garg N.S."/>
            <person name="Gelbart W.M."/>
            <person name="Glasser K."/>
            <person name="Glodek A."/>
            <person name="Gong F."/>
            <person name="Gorrell J.H."/>
            <person name="Gu Z."/>
            <person name="Guan P."/>
            <person name="Harris M."/>
            <person name="Harris N.L."/>
            <person name="Harvey D.A."/>
            <person name="Heiman T.J."/>
            <person name="Hernandez J.R."/>
            <person name="Houck J."/>
            <person name="Hostin D."/>
            <person name="Houston K.A."/>
            <person name="Howland T.J."/>
            <person name="Wei M.-H."/>
            <person name="Ibegwam C."/>
            <person name="Jalali M."/>
            <person name="Kalush F."/>
            <person name="Karpen G.H."/>
            <person name="Ke Z."/>
            <person name="Kennison J.A."/>
            <person name="Ketchum K.A."/>
            <person name="Kimmel B.E."/>
            <person name="Kodira C.D."/>
            <person name="Kraft C.L."/>
            <person name="Kravitz S."/>
            <person name="Kulp D."/>
            <person name="Lai Z."/>
            <person name="Lasko P."/>
            <person name="Lei Y."/>
            <person name="Levitsky A.A."/>
            <person name="Li J.H."/>
            <person name="Li Z."/>
            <person name="Liang Y."/>
            <person name="Lin X."/>
            <person name="Liu X."/>
            <person name="Mattei B."/>
            <person name="McIntosh T.C."/>
            <person name="McLeod M.P."/>
            <person name="McPherson D."/>
            <person name="Merkulov G."/>
            <person name="Milshina N.V."/>
            <person name="Mobarry C."/>
            <person name="Morris J."/>
            <person name="Moshrefi A."/>
            <person name="Mount S.M."/>
            <person name="Moy M."/>
            <person name="Murphy B."/>
            <person name="Murphy L."/>
            <person name="Muzny D.M."/>
            <person name="Nelson D.L."/>
            <person name="Nelson D.R."/>
            <person name="Nelson K.A."/>
            <person name="Nixon K."/>
            <person name="Nusskern D.R."/>
            <person name="Pacleb J.M."/>
            <person name="Palazzolo M."/>
            <person name="Pittman G.S."/>
            <person name="Pan S."/>
            <person name="Pollard J."/>
            <person name="Puri V."/>
            <person name="Reese M.G."/>
            <person name="Reinert K."/>
            <person name="Remington K."/>
            <person name="Saunders R.D.C."/>
            <person name="Scheeler F."/>
            <person name="Shen H."/>
            <person name="Shue B.C."/>
            <person name="Siden-Kiamos I."/>
            <person name="Simpson M."/>
            <person name="Skupski M.P."/>
            <person name="Smith T.J."/>
            <person name="Spier E."/>
            <person name="Spradling A.C."/>
            <person name="Stapleton M."/>
            <person name="Strong R."/>
            <person name="Sun E."/>
            <person name="Svirskas R."/>
            <person name="Tector C."/>
            <person name="Turner R."/>
            <person name="Venter E."/>
            <person name="Wang A.H."/>
            <person name="Wang X."/>
            <person name="Wang Z.-Y."/>
            <person name="Wassarman D.A."/>
            <person name="Weinstock G.M."/>
            <person name="Weissenbach J."/>
            <person name="Williams S.M."/>
            <person name="Woodage T."/>
            <person name="Worley K.C."/>
            <person name="Wu D."/>
            <person name="Yang S."/>
            <person name="Yao Q.A."/>
            <person name="Ye J."/>
            <person name="Yeh R.-F."/>
            <person name="Zaveri J.S."/>
            <person name="Zhan M."/>
            <person name="Zhang G."/>
            <person name="Zhao Q."/>
            <person name="Zheng L."/>
            <person name="Zheng X.H."/>
            <person name="Zhong F.N."/>
            <person name="Zhong W."/>
            <person name="Zhou X."/>
            <person name="Zhu S.C."/>
            <person name="Zhu X."/>
            <person name="Smith H.O."/>
            <person name="Gibbs R.A."/>
            <person name="Myers E.W."/>
            <person name="Rubin G.M."/>
            <person name="Venter J.C."/>
        </authorList>
    </citation>
    <scope>NUCLEOTIDE SEQUENCE [LARGE SCALE GENOMIC DNA]</scope>
    <source>
        <strain>Berkeley</strain>
    </source>
</reference>
<reference key="2">
    <citation type="journal article" date="2002" name="Genome Biol.">
        <title>Annotation of the Drosophila melanogaster euchromatic genome: a systematic review.</title>
        <authorList>
            <person name="Misra S."/>
            <person name="Crosby M.A."/>
            <person name="Mungall C.J."/>
            <person name="Matthews B.B."/>
            <person name="Campbell K.S."/>
            <person name="Hradecky P."/>
            <person name="Huang Y."/>
            <person name="Kaminker J.S."/>
            <person name="Millburn G.H."/>
            <person name="Prochnik S.E."/>
            <person name="Smith C.D."/>
            <person name="Tupy J.L."/>
            <person name="Whitfield E.J."/>
            <person name="Bayraktaroglu L."/>
            <person name="Berman B.P."/>
            <person name="Bettencourt B.R."/>
            <person name="Celniker S.E."/>
            <person name="de Grey A.D.N.J."/>
            <person name="Drysdale R.A."/>
            <person name="Harris N.L."/>
            <person name="Richter J."/>
            <person name="Russo S."/>
            <person name="Schroeder A.J."/>
            <person name="Shu S.Q."/>
            <person name="Stapleton M."/>
            <person name="Yamada C."/>
            <person name="Ashburner M."/>
            <person name="Gelbart W.M."/>
            <person name="Rubin G.M."/>
            <person name="Lewis S.E."/>
        </authorList>
    </citation>
    <scope>GENOME REANNOTATION</scope>
    <source>
        <strain>Berkeley</strain>
    </source>
</reference>
<reference key="3">
    <citation type="submission" date="2011-10" db="EMBL/GenBank/DDBJ databases">
        <authorList>
            <person name="Carlson J."/>
            <person name="Booth B."/>
            <person name="Frise E."/>
            <person name="Sandler J."/>
            <person name="Wan K."/>
            <person name="Yu C."/>
            <person name="Celniker S."/>
        </authorList>
    </citation>
    <scope>NUCLEOTIDE SEQUENCE [LARGE SCALE MRNA]</scope>
    <source>
        <strain>Berkeley</strain>
    </source>
</reference>